<feature type="chain" id="PRO_1000095553" description="Histidine--tRNA ligase">
    <location>
        <begin position="1"/>
        <end position="424"/>
    </location>
</feature>
<protein>
    <recommendedName>
        <fullName evidence="1">Histidine--tRNA ligase</fullName>
        <ecNumber evidence="1">6.1.1.21</ecNumber>
    </recommendedName>
    <alternativeName>
        <fullName evidence="1">Histidyl-tRNA synthetase</fullName>
        <shortName evidence="1">HisRS</shortName>
    </alternativeName>
</protein>
<comment type="catalytic activity">
    <reaction evidence="1">
        <text>tRNA(His) + L-histidine + ATP = L-histidyl-tRNA(His) + AMP + diphosphate + H(+)</text>
        <dbReference type="Rhea" id="RHEA:17313"/>
        <dbReference type="Rhea" id="RHEA-COMP:9665"/>
        <dbReference type="Rhea" id="RHEA-COMP:9689"/>
        <dbReference type="ChEBI" id="CHEBI:15378"/>
        <dbReference type="ChEBI" id="CHEBI:30616"/>
        <dbReference type="ChEBI" id="CHEBI:33019"/>
        <dbReference type="ChEBI" id="CHEBI:57595"/>
        <dbReference type="ChEBI" id="CHEBI:78442"/>
        <dbReference type="ChEBI" id="CHEBI:78527"/>
        <dbReference type="ChEBI" id="CHEBI:456215"/>
        <dbReference type="EC" id="6.1.1.21"/>
    </reaction>
</comment>
<comment type="subunit">
    <text evidence="1">Homodimer.</text>
</comment>
<comment type="subcellular location">
    <subcellularLocation>
        <location evidence="1">Cytoplasm</location>
    </subcellularLocation>
</comment>
<comment type="similarity">
    <text evidence="1">Belongs to the class-II aminoacyl-tRNA synthetase family.</text>
</comment>
<evidence type="ECO:0000255" key="1">
    <source>
        <dbReference type="HAMAP-Rule" id="MF_00127"/>
    </source>
</evidence>
<sequence length="424" mass="47041">MAKNIQAIRGMNDYLPGETAIWQRIEGTLKNVLGSYGYSEIRLPIVEQTPLFKRAIGEVTDVVEKEMYTFEDRNGDSLTLRPEGTAGCVRAGIEHGLLYNQEQRLWYIGPMFRHERPQKGRYRQFHQLGCEVFGLQGPDIDAELIMLTARWWRALGISEHVTLELNSIGSLEARANYRDALVAFLEQYKDKLDEDCKRRMYTNPLRVLDSKNPEVQALLNDAPALGDYLDEESREHFAGLCKLLESAGIAYTVNQRLVRGLDYYNRTVFEWVTNSLGSQGTVCAGGRYDGLVEQLGGRATPAVGFAMGLERLVLLVQAVNPEFKADPVVDIYLVASGADTQSAAMALAERLRDELPGVKLMTNHGGGNFKKQFARADKWGARVAVVLGESEVANGTAVVKDLRSGEQTAVAQDSVAAHLRTLLG</sequence>
<reference key="1">
    <citation type="journal article" date="2008" name="DNA Res.">
        <title>Complete genome sequence and comparative analysis of the wild-type commensal Escherichia coli strain SE11 isolated from a healthy adult.</title>
        <authorList>
            <person name="Oshima K."/>
            <person name="Toh H."/>
            <person name="Ogura Y."/>
            <person name="Sasamoto H."/>
            <person name="Morita H."/>
            <person name="Park S.-H."/>
            <person name="Ooka T."/>
            <person name="Iyoda S."/>
            <person name="Taylor T.D."/>
            <person name="Hayashi T."/>
            <person name="Itoh K."/>
            <person name="Hattori M."/>
        </authorList>
    </citation>
    <scope>NUCLEOTIDE SEQUENCE [LARGE SCALE GENOMIC DNA]</scope>
    <source>
        <strain>SE11</strain>
    </source>
</reference>
<accession>B6I586</accession>
<name>SYH_ECOSE</name>
<organism>
    <name type="scientific">Escherichia coli (strain SE11)</name>
    <dbReference type="NCBI Taxonomy" id="409438"/>
    <lineage>
        <taxon>Bacteria</taxon>
        <taxon>Pseudomonadati</taxon>
        <taxon>Pseudomonadota</taxon>
        <taxon>Gammaproteobacteria</taxon>
        <taxon>Enterobacterales</taxon>
        <taxon>Enterobacteriaceae</taxon>
        <taxon>Escherichia</taxon>
    </lineage>
</organism>
<proteinExistence type="inferred from homology"/>
<dbReference type="EC" id="6.1.1.21" evidence="1"/>
<dbReference type="EMBL" id="AP009240">
    <property type="protein sequence ID" value="BAG78324.1"/>
    <property type="molecule type" value="Genomic_DNA"/>
</dbReference>
<dbReference type="RefSeq" id="WP_001107180.1">
    <property type="nucleotide sequence ID" value="NC_011415.1"/>
</dbReference>
<dbReference type="SMR" id="B6I586"/>
<dbReference type="KEGG" id="ecy:ECSE_2800"/>
<dbReference type="HOGENOM" id="CLU_025113_1_1_6"/>
<dbReference type="Proteomes" id="UP000008199">
    <property type="component" value="Chromosome"/>
</dbReference>
<dbReference type="GO" id="GO:0005737">
    <property type="term" value="C:cytoplasm"/>
    <property type="evidence" value="ECO:0007669"/>
    <property type="project" value="UniProtKB-SubCell"/>
</dbReference>
<dbReference type="GO" id="GO:0005524">
    <property type="term" value="F:ATP binding"/>
    <property type="evidence" value="ECO:0007669"/>
    <property type="project" value="UniProtKB-UniRule"/>
</dbReference>
<dbReference type="GO" id="GO:0004821">
    <property type="term" value="F:histidine-tRNA ligase activity"/>
    <property type="evidence" value="ECO:0007669"/>
    <property type="project" value="UniProtKB-UniRule"/>
</dbReference>
<dbReference type="GO" id="GO:0006427">
    <property type="term" value="P:histidyl-tRNA aminoacylation"/>
    <property type="evidence" value="ECO:0007669"/>
    <property type="project" value="UniProtKB-UniRule"/>
</dbReference>
<dbReference type="CDD" id="cd00773">
    <property type="entry name" value="HisRS-like_core"/>
    <property type="match status" value="1"/>
</dbReference>
<dbReference type="CDD" id="cd00859">
    <property type="entry name" value="HisRS_anticodon"/>
    <property type="match status" value="1"/>
</dbReference>
<dbReference type="FunFam" id="3.30.930.10:FF:000005">
    <property type="entry name" value="Histidine--tRNA ligase"/>
    <property type="match status" value="1"/>
</dbReference>
<dbReference type="FunFam" id="3.40.50.800:FF:000007">
    <property type="entry name" value="Histidine--tRNA ligase"/>
    <property type="match status" value="1"/>
</dbReference>
<dbReference type="Gene3D" id="3.40.50.800">
    <property type="entry name" value="Anticodon-binding domain"/>
    <property type="match status" value="1"/>
</dbReference>
<dbReference type="Gene3D" id="3.30.930.10">
    <property type="entry name" value="Bira Bifunctional Protein, Domain 2"/>
    <property type="match status" value="1"/>
</dbReference>
<dbReference type="HAMAP" id="MF_00127">
    <property type="entry name" value="His_tRNA_synth"/>
    <property type="match status" value="1"/>
</dbReference>
<dbReference type="InterPro" id="IPR006195">
    <property type="entry name" value="aa-tRNA-synth_II"/>
</dbReference>
<dbReference type="InterPro" id="IPR045864">
    <property type="entry name" value="aa-tRNA-synth_II/BPL/LPL"/>
</dbReference>
<dbReference type="InterPro" id="IPR004154">
    <property type="entry name" value="Anticodon-bd"/>
</dbReference>
<dbReference type="InterPro" id="IPR036621">
    <property type="entry name" value="Anticodon-bd_dom_sf"/>
</dbReference>
<dbReference type="InterPro" id="IPR015807">
    <property type="entry name" value="His-tRNA-ligase"/>
</dbReference>
<dbReference type="InterPro" id="IPR041715">
    <property type="entry name" value="HisRS-like_core"/>
</dbReference>
<dbReference type="InterPro" id="IPR004516">
    <property type="entry name" value="HisRS/HisZ"/>
</dbReference>
<dbReference type="InterPro" id="IPR033656">
    <property type="entry name" value="HisRS_anticodon"/>
</dbReference>
<dbReference type="NCBIfam" id="TIGR00442">
    <property type="entry name" value="hisS"/>
    <property type="match status" value="1"/>
</dbReference>
<dbReference type="PANTHER" id="PTHR43707:SF1">
    <property type="entry name" value="HISTIDINE--TRNA LIGASE, MITOCHONDRIAL-RELATED"/>
    <property type="match status" value="1"/>
</dbReference>
<dbReference type="PANTHER" id="PTHR43707">
    <property type="entry name" value="HISTIDYL-TRNA SYNTHETASE"/>
    <property type="match status" value="1"/>
</dbReference>
<dbReference type="Pfam" id="PF03129">
    <property type="entry name" value="HGTP_anticodon"/>
    <property type="match status" value="1"/>
</dbReference>
<dbReference type="Pfam" id="PF13393">
    <property type="entry name" value="tRNA-synt_His"/>
    <property type="match status" value="1"/>
</dbReference>
<dbReference type="PIRSF" id="PIRSF001549">
    <property type="entry name" value="His-tRNA_synth"/>
    <property type="match status" value="1"/>
</dbReference>
<dbReference type="SUPFAM" id="SSF52954">
    <property type="entry name" value="Class II aaRS ABD-related"/>
    <property type="match status" value="1"/>
</dbReference>
<dbReference type="SUPFAM" id="SSF55681">
    <property type="entry name" value="Class II aaRS and biotin synthetases"/>
    <property type="match status" value="1"/>
</dbReference>
<dbReference type="PROSITE" id="PS50862">
    <property type="entry name" value="AA_TRNA_LIGASE_II"/>
    <property type="match status" value="1"/>
</dbReference>
<keyword id="KW-0030">Aminoacyl-tRNA synthetase</keyword>
<keyword id="KW-0067">ATP-binding</keyword>
<keyword id="KW-0963">Cytoplasm</keyword>
<keyword id="KW-0436">Ligase</keyword>
<keyword id="KW-0547">Nucleotide-binding</keyword>
<keyword id="KW-0648">Protein biosynthesis</keyword>
<gene>
    <name evidence="1" type="primary">hisS</name>
    <name type="ordered locus">ECSE_2800</name>
</gene>